<evidence type="ECO:0000255" key="1">
    <source>
        <dbReference type="HAMAP-Rule" id="MF_01040"/>
    </source>
</evidence>
<feature type="chain" id="PRO_1000064122" description="Probable phosphoglycerate mutase GpmB">
    <location>
        <begin position="1"/>
        <end position="215"/>
    </location>
</feature>
<feature type="active site" description="Tele-phosphohistidine intermediate" evidence="1">
    <location>
        <position position="9"/>
    </location>
</feature>
<feature type="active site" description="Proton donor/acceptor" evidence="1">
    <location>
        <position position="82"/>
    </location>
</feature>
<feature type="binding site" evidence="1">
    <location>
        <begin position="8"/>
        <end position="15"/>
    </location>
    <ligand>
        <name>substrate</name>
    </ligand>
</feature>
<feature type="binding site" evidence="1">
    <location>
        <begin position="21"/>
        <end position="22"/>
    </location>
    <ligand>
        <name>substrate</name>
    </ligand>
</feature>
<feature type="binding site" evidence="1">
    <location>
        <position position="58"/>
    </location>
    <ligand>
        <name>substrate</name>
    </ligand>
</feature>
<feature type="binding site" evidence="1">
    <location>
        <position position="60"/>
    </location>
    <ligand>
        <name>substrate</name>
    </ligand>
</feature>
<feature type="binding site" evidence="1">
    <location>
        <begin position="82"/>
        <end position="85"/>
    </location>
    <ligand>
        <name>substrate</name>
    </ligand>
</feature>
<feature type="binding site" evidence="1">
    <location>
        <begin position="104"/>
        <end position="105"/>
    </location>
    <ligand>
        <name>substrate</name>
    </ligand>
</feature>
<feature type="binding site" evidence="1">
    <location>
        <begin position="151"/>
        <end position="152"/>
    </location>
    <ligand>
        <name>substrate</name>
    </ligand>
</feature>
<feature type="site" description="Transition state stabilizer" evidence="1">
    <location>
        <position position="150"/>
    </location>
</feature>
<dbReference type="EC" id="5.4.2.-" evidence="1"/>
<dbReference type="EMBL" id="CP000468">
    <property type="protein sequence ID" value="ABJ03954.1"/>
    <property type="molecule type" value="Genomic_DNA"/>
</dbReference>
<dbReference type="RefSeq" id="WP_000942350.1">
    <property type="nucleotide sequence ID" value="NZ_CADILS010000013.1"/>
</dbReference>
<dbReference type="SMR" id="A1AJW4"/>
<dbReference type="KEGG" id="ecv:APECO1_1984"/>
<dbReference type="HOGENOM" id="CLU_033323_9_5_6"/>
<dbReference type="UniPathway" id="UPA00109">
    <property type="reaction ID" value="UER00186"/>
</dbReference>
<dbReference type="Proteomes" id="UP000008216">
    <property type="component" value="Chromosome"/>
</dbReference>
<dbReference type="GO" id="GO:0005737">
    <property type="term" value="C:cytoplasm"/>
    <property type="evidence" value="ECO:0007669"/>
    <property type="project" value="TreeGrafter"/>
</dbReference>
<dbReference type="GO" id="GO:0016791">
    <property type="term" value="F:phosphatase activity"/>
    <property type="evidence" value="ECO:0007669"/>
    <property type="project" value="TreeGrafter"/>
</dbReference>
<dbReference type="GO" id="GO:0004619">
    <property type="term" value="F:phosphoglycerate mutase activity"/>
    <property type="evidence" value="ECO:0007669"/>
    <property type="project" value="UniProtKB-UniRule"/>
</dbReference>
<dbReference type="GO" id="GO:0006096">
    <property type="term" value="P:glycolytic process"/>
    <property type="evidence" value="ECO:0007669"/>
    <property type="project" value="UniProtKB-UniRule"/>
</dbReference>
<dbReference type="CDD" id="cd07067">
    <property type="entry name" value="HP_PGM_like"/>
    <property type="match status" value="1"/>
</dbReference>
<dbReference type="Gene3D" id="3.40.50.1240">
    <property type="entry name" value="Phosphoglycerate mutase-like"/>
    <property type="match status" value="1"/>
</dbReference>
<dbReference type="HAMAP" id="MF_01040">
    <property type="entry name" value="PGAM_GpmB"/>
    <property type="match status" value="1"/>
</dbReference>
<dbReference type="InterPro" id="IPR013078">
    <property type="entry name" value="His_Pase_superF_clade-1"/>
</dbReference>
<dbReference type="InterPro" id="IPR029033">
    <property type="entry name" value="His_PPase_superfam"/>
</dbReference>
<dbReference type="InterPro" id="IPR001345">
    <property type="entry name" value="PG/BPGM_mutase_AS"/>
</dbReference>
<dbReference type="InterPro" id="IPR050275">
    <property type="entry name" value="PGM_Phosphatase"/>
</dbReference>
<dbReference type="InterPro" id="IPR023086">
    <property type="entry name" value="Phosphoglycerate_mutase_GpmB"/>
</dbReference>
<dbReference type="NCBIfam" id="NF002901">
    <property type="entry name" value="PRK03482.1"/>
    <property type="match status" value="1"/>
</dbReference>
<dbReference type="PANTHER" id="PTHR48100">
    <property type="entry name" value="BROAD-SPECIFICITY PHOSPHATASE YOR283W-RELATED"/>
    <property type="match status" value="1"/>
</dbReference>
<dbReference type="PANTHER" id="PTHR48100:SF1">
    <property type="entry name" value="HISTIDINE PHOSPHATASE FAMILY PROTEIN-RELATED"/>
    <property type="match status" value="1"/>
</dbReference>
<dbReference type="Pfam" id="PF00300">
    <property type="entry name" value="His_Phos_1"/>
    <property type="match status" value="1"/>
</dbReference>
<dbReference type="SMART" id="SM00855">
    <property type="entry name" value="PGAM"/>
    <property type="match status" value="1"/>
</dbReference>
<dbReference type="SUPFAM" id="SSF53254">
    <property type="entry name" value="Phosphoglycerate mutase-like"/>
    <property type="match status" value="1"/>
</dbReference>
<dbReference type="PROSITE" id="PS00175">
    <property type="entry name" value="PG_MUTASE"/>
    <property type="match status" value="1"/>
</dbReference>
<reference key="1">
    <citation type="journal article" date="2007" name="J. Bacteriol.">
        <title>The genome sequence of avian pathogenic Escherichia coli strain O1:K1:H7 shares strong similarities with human extraintestinal pathogenic E. coli genomes.</title>
        <authorList>
            <person name="Johnson T.J."/>
            <person name="Kariyawasam S."/>
            <person name="Wannemuehler Y."/>
            <person name="Mangiamele P."/>
            <person name="Johnson S.J."/>
            <person name="Doetkott C."/>
            <person name="Skyberg J.A."/>
            <person name="Lynne A.M."/>
            <person name="Johnson J.R."/>
            <person name="Nolan L.K."/>
        </authorList>
    </citation>
    <scope>NUCLEOTIDE SEQUENCE [LARGE SCALE GENOMIC DNA]</scope>
</reference>
<sequence length="215" mass="24015">MLQVYLVRHGETQWNAERRIQGQSDSPLTAKGEQQAMQVATRAKELGITHIISSDLGRTRRTAEIIAQACGCDIIFDSRLRELNMGVLETRNIDSLTEEEENWRRQLVNGTVDGRIPEGESMQELSDRVNAALESCRDLPQGSRPLLVSHGIALGCLVSTILGLPAWAERRLRLRNCSISRVDYQESLWLASGWVVETAGDISHLDAPALDELQR</sequence>
<proteinExistence type="inferred from homology"/>
<keyword id="KW-0324">Glycolysis</keyword>
<keyword id="KW-0413">Isomerase</keyword>
<keyword id="KW-1185">Reference proteome</keyword>
<protein>
    <recommendedName>
        <fullName evidence="1">Probable phosphoglycerate mutase GpmB</fullName>
        <ecNumber evidence="1">5.4.2.-</ecNumber>
    </recommendedName>
    <alternativeName>
        <fullName evidence="1">PGAM</fullName>
    </alternativeName>
    <alternativeName>
        <fullName evidence="1">Phosphoglyceromutase</fullName>
    </alternativeName>
</protein>
<comment type="catalytic activity">
    <reaction evidence="1">
        <text>(2R)-2-phosphoglycerate = (2R)-3-phosphoglycerate</text>
        <dbReference type="Rhea" id="RHEA:15901"/>
        <dbReference type="ChEBI" id="CHEBI:58272"/>
        <dbReference type="ChEBI" id="CHEBI:58289"/>
    </reaction>
</comment>
<comment type="pathway">
    <text evidence="1">Carbohydrate degradation; glycolysis; pyruvate from D-glyceraldehyde 3-phosphate: step 3/5.</text>
</comment>
<comment type="similarity">
    <text evidence="1">Belongs to the phosphoglycerate mutase family. GpmB subfamily.</text>
</comment>
<name>GPMB_ECOK1</name>
<organism>
    <name type="scientific">Escherichia coli O1:K1 / APEC</name>
    <dbReference type="NCBI Taxonomy" id="405955"/>
    <lineage>
        <taxon>Bacteria</taxon>
        <taxon>Pseudomonadati</taxon>
        <taxon>Pseudomonadota</taxon>
        <taxon>Gammaproteobacteria</taxon>
        <taxon>Enterobacterales</taxon>
        <taxon>Enterobacteriaceae</taxon>
        <taxon>Escherichia</taxon>
    </lineage>
</organism>
<gene>
    <name evidence="1" type="primary">gpmB</name>
    <name type="ordered locus">Ecok1_44600</name>
    <name type="ORF">APECO1_1984</name>
</gene>
<accession>A1AJW4</accession>